<feature type="chain" id="PRO_1000015983" description="Aspartyl/glutamyl-tRNA(Asn/Gln) amidotransferase subunit B">
    <location>
        <begin position="1"/>
        <end position="477"/>
    </location>
</feature>
<name>GATB_LIGS1</name>
<organism>
    <name type="scientific">Ligilactobacillus salivarius (strain UCC118)</name>
    <name type="common">Lactobacillus salivarius</name>
    <dbReference type="NCBI Taxonomy" id="362948"/>
    <lineage>
        <taxon>Bacteria</taxon>
        <taxon>Bacillati</taxon>
        <taxon>Bacillota</taxon>
        <taxon>Bacilli</taxon>
        <taxon>Lactobacillales</taxon>
        <taxon>Lactobacillaceae</taxon>
        <taxon>Ligilactobacillus</taxon>
    </lineage>
</organism>
<protein>
    <recommendedName>
        <fullName evidence="1">Aspartyl/glutamyl-tRNA(Asn/Gln) amidotransferase subunit B</fullName>
        <shortName evidence="1">Asp/Glu-ADT subunit B</shortName>
        <ecNumber evidence="1">6.3.5.-</ecNumber>
    </recommendedName>
</protein>
<sequence length="477" mass="53726">MNFETTVGLEVHIEMQTNSKAYSPSPVQYGAEQNTNTNVIDWGYPGVLPEINKGALEFGMRAALALHCDITQDVGFDRKNYFYPDNPKAYQITQARTPIGTNGWLEIELEDGTKKKIGIREMHVEEDAGKNTHNPDGYSYVDLNRQGTPLIEIVAEPDISSADEAYAYLTKLRQVIQFTGISDVKMEEGSMRADVNVSIAPIGSDKLGVRTEMKNLNSFEHVRKGIQYEVKRQERLLMSGGEVEQETRRFDEPSGETILMRSKEEANDYRYFPEPDLPPIHISDDWIEEVRASIPEMPDKRRERYTQDWGIPAYDAGVLTQTKEMSDFYDATVAAGAGPKLAANWLMGEVNAYLNSKQVELSDTALTPEHLATMIKLIEDETISSKIAKKVFKEIITNDTEPKAWVESKGMVQLSDPAKLQPIIDEVLDNNEQSIEDFKNGKDRAIGFLVGQIMKKTRGMANPKMVNKLLMASLKER</sequence>
<comment type="function">
    <text evidence="1">Allows the formation of correctly charged Asn-tRNA(Asn) or Gln-tRNA(Gln) through the transamidation of misacylated Asp-tRNA(Asn) or Glu-tRNA(Gln) in organisms which lack either or both of asparaginyl-tRNA or glutaminyl-tRNA synthetases. The reaction takes place in the presence of glutamine and ATP through an activated phospho-Asp-tRNA(Asn) or phospho-Glu-tRNA(Gln).</text>
</comment>
<comment type="catalytic activity">
    <reaction evidence="1">
        <text>L-glutamyl-tRNA(Gln) + L-glutamine + ATP + H2O = L-glutaminyl-tRNA(Gln) + L-glutamate + ADP + phosphate + H(+)</text>
        <dbReference type="Rhea" id="RHEA:17521"/>
        <dbReference type="Rhea" id="RHEA-COMP:9681"/>
        <dbReference type="Rhea" id="RHEA-COMP:9684"/>
        <dbReference type="ChEBI" id="CHEBI:15377"/>
        <dbReference type="ChEBI" id="CHEBI:15378"/>
        <dbReference type="ChEBI" id="CHEBI:29985"/>
        <dbReference type="ChEBI" id="CHEBI:30616"/>
        <dbReference type="ChEBI" id="CHEBI:43474"/>
        <dbReference type="ChEBI" id="CHEBI:58359"/>
        <dbReference type="ChEBI" id="CHEBI:78520"/>
        <dbReference type="ChEBI" id="CHEBI:78521"/>
        <dbReference type="ChEBI" id="CHEBI:456216"/>
    </reaction>
</comment>
<comment type="catalytic activity">
    <reaction evidence="1">
        <text>L-aspartyl-tRNA(Asn) + L-glutamine + ATP + H2O = L-asparaginyl-tRNA(Asn) + L-glutamate + ADP + phosphate + 2 H(+)</text>
        <dbReference type="Rhea" id="RHEA:14513"/>
        <dbReference type="Rhea" id="RHEA-COMP:9674"/>
        <dbReference type="Rhea" id="RHEA-COMP:9677"/>
        <dbReference type="ChEBI" id="CHEBI:15377"/>
        <dbReference type="ChEBI" id="CHEBI:15378"/>
        <dbReference type="ChEBI" id="CHEBI:29985"/>
        <dbReference type="ChEBI" id="CHEBI:30616"/>
        <dbReference type="ChEBI" id="CHEBI:43474"/>
        <dbReference type="ChEBI" id="CHEBI:58359"/>
        <dbReference type="ChEBI" id="CHEBI:78515"/>
        <dbReference type="ChEBI" id="CHEBI:78516"/>
        <dbReference type="ChEBI" id="CHEBI:456216"/>
    </reaction>
</comment>
<comment type="subunit">
    <text evidence="1">Heterotrimer of A, B and C subunits.</text>
</comment>
<comment type="similarity">
    <text evidence="1">Belongs to the GatB/GatE family. GatB subfamily.</text>
</comment>
<dbReference type="EC" id="6.3.5.-" evidence="1"/>
<dbReference type="EMBL" id="CP000233">
    <property type="protein sequence ID" value="ABE00149.1"/>
    <property type="molecule type" value="Genomic_DNA"/>
</dbReference>
<dbReference type="RefSeq" id="WP_011476295.1">
    <property type="nucleotide sequence ID" value="NC_007929.1"/>
</dbReference>
<dbReference type="RefSeq" id="YP_536232.1">
    <property type="nucleotide sequence ID" value="NC_007929.1"/>
</dbReference>
<dbReference type="SMR" id="Q1WSI0"/>
<dbReference type="STRING" id="362948.LSL_1344"/>
<dbReference type="KEGG" id="lsl:LSL_1344"/>
<dbReference type="PATRIC" id="fig|362948.14.peg.1419"/>
<dbReference type="HOGENOM" id="CLU_019240_0_0_9"/>
<dbReference type="OrthoDB" id="9804078at2"/>
<dbReference type="Proteomes" id="UP000006559">
    <property type="component" value="Chromosome"/>
</dbReference>
<dbReference type="GO" id="GO:0050566">
    <property type="term" value="F:asparaginyl-tRNA synthase (glutamine-hydrolyzing) activity"/>
    <property type="evidence" value="ECO:0007669"/>
    <property type="project" value="RHEA"/>
</dbReference>
<dbReference type="GO" id="GO:0005524">
    <property type="term" value="F:ATP binding"/>
    <property type="evidence" value="ECO:0007669"/>
    <property type="project" value="UniProtKB-KW"/>
</dbReference>
<dbReference type="GO" id="GO:0050567">
    <property type="term" value="F:glutaminyl-tRNA synthase (glutamine-hydrolyzing) activity"/>
    <property type="evidence" value="ECO:0007669"/>
    <property type="project" value="UniProtKB-UniRule"/>
</dbReference>
<dbReference type="GO" id="GO:0070681">
    <property type="term" value="P:glutaminyl-tRNAGln biosynthesis via transamidation"/>
    <property type="evidence" value="ECO:0007669"/>
    <property type="project" value="TreeGrafter"/>
</dbReference>
<dbReference type="GO" id="GO:0006412">
    <property type="term" value="P:translation"/>
    <property type="evidence" value="ECO:0007669"/>
    <property type="project" value="UniProtKB-UniRule"/>
</dbReference>
<dbReference type="FunFam" id="1.10.10.410:FF:000001">
    <property type="entry name" value="Aspartyl/glutamyl-tRNA(Asn/Gln) amidotransferase subunit B"/>
    <property type="match status" value="1"/>
</dbReference>
<dbReference type="FunFam" id="1.10.150.380:FF:000001">
    <property type="entry name" value="Aspartyl/glutamyl-tRNA(Asn/Gln) amidotransferase subunit B"/>
    <property type="match status" value="1"/>
</dbReference>
<dbReference type="Gene3D" id="1.10.10.410">
    <property type="match status" value="1"/>
</dbReference>
<dbReference type="Gene3D" id="1.10.150.380">
    <property type="entry name" value="GatB domain, N-terminal subdomain"/>
    <property type="match status" value="1"/>
</dbReference>
<dbReference type="HAMAP" id="MF_00121">
    <property type="entry name" value="GatB"/>
    <property type="match status" value="1"/>
</dbReference>
<dbReference type="InterPro" id="IPR017959">
    <property type="entry name" value="Asn/Gln-tRNA_amidoTrfase_suB/E"/>
</dbReference>
<dbReference type="InterPro" id="IPR006075">
    <property type="entry name" value="Asn/Gln-tRNA_Trfase_suB/E_cat"/>
</dbReference>
<dbReference type="InterPro" id="IPR018027">
    <property type="entry name" value="Asn/Gln_amidotransferase"/>
</dbReference>
<dbReference type="InterPro" id="IPR003789">
    <property type="entry name" value="Asn/Gln_tRNA_amidoTrase-B-like"/>
</dbReference>
<dbReference type="InterPro" id="IPR004413">
    <property type="entry name" value="GatB"/>
</dbReference>
<dbReference type="InterPro" id="IPR042114">
    <property type="entry name" value="GatB_C_1"/>
</dbReference>
<dbReference type="InterPro" id="IPR023168">
    <property type="entry name" value="GatB_Yqey_C_2"/>
</dbReference>
<dbReference type="InterPro" id="IPR014746">
    <property type="entry name" value="Gln_synth/guanido_kin_cat_dom"/>
</dbReference>
<dbReference type="NCBIfam" id="TIGR00133">
    <property type="entry name" value="gatB"/>
    <property type="match status" value="1"/>
</dbReference>
<dbReference type="NCBIfam" id="NF004011">
    <property type="entry name" value="PRK05477.1-1"/>
    <property type="match status" value="1"/>
</dbReference>
<dbReference type="NCBIfam" id="NF004012">
    <property type="entry name" value="PRK05477.1-2"/>
    <property type="match status" value="1"/>
</dbReference>
<dbReference type="NCBIfam" id="NF004014">
    <property type="entry name" value="PRK05477.1-4"/>
    <property type="match status" value="1"/>
</dbReference>
<dbReference type="PANTHER" id="PTHR11659">
    <property type="entry name" value="GLUTAMYL-TRNA GLN AMIDOTRANSFERASE SUBUNIT B MITOCHONDRIAL AND PROKARYOTIC PET112-RELATED"/>
    <property type="match status" value="1"/>
</dbReference>
<dbReference type="PANTHER" id="PTHR11659:SF0">
    <property type="entry name" value="GLUTAMYL-TRNA(GLN) AMIDOTRANSFERASE SUBUNIT B, MITOCHONDRIAL"/>
    <property type="match status" value="1"/>
</dbReference>
<dbReference type="Pfam" id="PF02934">
    <property type="entry name" value="GatB_N"/>
    <property type="match status" value="1"/>
</dbReference>
<dbReference type="Pfam" id="PF02637">
    <property type="entry name" value="GatB_Yqey"/>
    <property type="match status" value="1"/>
</dbReference>
<dbReference type="SMART" id="SM00845">
    <property type="entry name" value="GatB_Yqey"/>
    <property type="match status" value="1"/>
</dbReference>
<dbReference type="SUPFAM" id="SSF89095">
    <property type="entry name" value="GatB/YqeY motif"/>
    <property type="match status" value="1"/>
</dbReference>
<dbReference type="SUPFAM" id="SSF55931">
    <property type="entry name" value="Glutamine synthetase/guanido kinase"/>
    <property type="match status" value="1"/>
</dbReference>
<keyword id="KW-0067">ATP-binding</keyword>
<keyword id="KW-0436">Ligase</keyword>
<keyword id="KW-0547">Nucleotide-binding</keyword>
<keyword id="KW-0648">Protein biosynthesis</keyword>
<keyword id="KW-1185">Reference proteome</keyword>
<reference key="1">
    <citation type="journal article" date="2006" name="Proc. Natl. Acad. Sci. U.S.A.">
        <title>Multireplicon genome architecture of Lactobacillus salivarius.</title>
        <authorList>
            <person name="Claesson M.J."/>
            <person name="Li Y."/>
            <person name="Leahy S."/>
            <person name="Canchaya C."/>
            <person name="van Pijkeren J.P."/>
            <person name="Cerdeno-Tarraga A.M."/>
            <person name="Parkhill J."/>
            <person name="Flynn S."/>
            <person name="O'Sullivan G.C."/>
            <person name="Collins J.K."/>
            <person name="Higgins D."/>
            <person name="Shanahan F."/>
            <person name="Fitzgerald G.F."/>
            <person name="van Sinderen D."/>
            <person name="O'Toole P.W."/>
        </authorList>
    </citation>
    <scope>NUCLEOTIDE SEQUENCE [LARGE SCALE GENOMIC DNA]</scope>
    <source>
        <strain>UCC118</strain>
    </source>
</reference>
<accession>Q1WSI0</accession>
<proteinExistence type="inferred from homology"/>
<gene>
    <name evidence="1" type="primary">gatB</name>
    <name type="ordered locus">LSL_1344</name>
</gene>
<evidence type="ECO:0000255" key="1">
    <source>
        <dbReference type="HAMAP-Rule" id="MF_00121"/>
    </source>
</evidence>